<sequence length="1826" mass="203909">MVGVLSMAAAAAPLPVKDYEIEPCKKRRKDDDNSSCETITKYLSPIGKTGDKVFSPPKPSNILHYFRKTSLTTEKPQSTKAYKIKPSPPLLVGNSKDCKTPLEVFSNREFKRKRKRVSLSSQLNDIKIQDECPVEISNNDSKEDGGLSDCVESSASVSLYKEHVEVLAESIEDSRNQPNTKSSKKKVNPKQCTTKSDDRILRKRKRSKVTGQSESVPLADELSLPEDGGKDSKLTKPSLAEENDSRTHATKRADLKESTITVSYEEFVKSHKAAKVEEIPDPAVPACVPSGPGEAVKSGSEGELSGSCEPSPQLHLKTVTVLAQVHPTPPKKKGKIPPIFLKQKQPELENSLSDPENEQPVQKRKSNVVIQEGQLELAVLEAWNSEASVPKCSMEERQQFMRAFRQPPPDTLKNGFKKPLEKQKDPSEKSVHEGDSSSEKIIENPNIQRVSSQGCLQSHADRGSFPKEKSKKPNKKGKKTRTTAGGNREENIQKEKTAFSLKDEQDQNSLRRSVRQKSEVLKSNALLNSENLVCEDTAHDSVQMSLCNRNKSRSSSTPTRDMVTHHRAEPGSSLEYVSTRQPIRRSLRSCSTPATNALGGTESEDAQDTIPVKASTPKSARTSEKHNLYTAELIIVSSDSESPIRMKFTRISTPKKSKKSSKKSETTEEELTSQKKKANSTSKNISKAKELIEEAKAFQIGGSKTEETVVPLRRSSRHQARSAKEKSPEIDDSVIVIDSSPTSIREPEKSQKKLQNLNDVLGKKLNKSSKNVPGKMKIAPLFLAKRTKRAAIPVFDLDESSQDSSEQTQDCDVQFKAKRDFLMSGLPDLLKRQIAKKAAALDVYNAVSTSFQRVVHVQQKDDEYWLWHLKPPSCPLLTEFKELNTKVTDLSEYVVAFGEFSTLNPNPRSNPAAVMMRTRKDFTKEVRNLLLEEIKCSNPEFSLEKYFPLLLKKRIEHQVLCEGHGKQASPQLQPDVSQKETKRKQVATGNQKSKRKRQNEYSVSPEEMKGRSKDLDERISSSCTNLDPSRDSGTEDMLWTEKYQPQNSNELIGNELAVKKLHSWLKDWKRRAELEERHNLKGKRDEKEEGILDLSDSTDFKGSSDDEENRLCNTVLITGPTGVGKTAAVYACAQELGFKIFEVNASSQRSGRQILSQLKEATQSHQVDKQGVNSQKPCFFNNYNIGKSPKKLNSPGKVVTSPRKLPPSSPKTSGQKRALLPKTLANYFKVSSKSKSNDDVGALMGDDKGVKNSSLEQRQLIQTKSTNANNSHIKDVGAEESNRKKATSLILFEEVDVIFDEDAGFLNAVKTFMATTKRPVILTTSDPTFSLVFDGCFEEINFSIPSLLNVASYLQVICLVENFRTDFKDFVTLLTANACDIRKSILYLQFWIRSGGGILEERPLSHCRENSRNTLVCSEDGSDANINSKKPKRNRVALPRCDTGCAEALFGLKNIASPSQDLLSLLKHKITTKEEWQKLIQVLTEFHVQNIDLLHSNLEVILPLPVHVVPDVRGAYGFPVTTQASAPASMGHLTRKQSKDQPLRKSQKRKQKKMVILDDSDLFDTGLDFSGELPSLSPAPSLSVEDNIRRDSNPEIKTQNSGFKPHSVPQPPKTLAEKKCCMLVSHCLNSLSEFMENMSFIDALLTDPGEQNELGRSAFHWTNGRVKSGLCDEFSLENRDRWAPQSAGELKATAEALSFTECSSTISKALESLNSCKQLERDPTNELTVCVSQRRHDACFRQSAANLDNADKRMAVIKSVFSSRSFLTLGNKQASIIDYLPTLRNICRTEKLKEQEKNKRRFLHYFEGIHLEIPEETITTLAADFP</sequence>
<proteinExistence type="evidence at protein level"/>
<protein>
    <recommendedName>
        <fullName>ATPase family AAA domain-containing protein 5</fullName>
    </recommendedName>
    <alternativeName>
        <fullName>Chromosome fragility-associated gene 1 protein</fullName>
    </alternativeName>
</protein>
<organism>
    <name type="scientific">Mus musculus</name>
    <name type="common">Mouse</name>
    <dbReference type="NCBI Taxonomy" id="10090"/>
    <lineage>
        <taxon>Eukaryota</taxon>
        <taxon>Metazoa</taxon>
        <taxon>Chordata</taxon>
        <taxon>Craniata</taxon>
        <taxon>Vertebrata</taxon>
        <taxon>Euteleostomi</taxon>
        <taxon>Mammalia</taxon>
        <taxon>Eutheria</taxon>
        <taxon>Euarchontoglires</taxon>
        <taxon>Glires</taxon>
        <taxon>Rodentia</taxon>
        <taxon>Myomorpha</taxon>
        <taxon>Muroidea</taxon>
        <taxon>Muridae</taxon>
        <taxon>Murinae</taxon>
        <taxon>Mus</taxon>
        <taxon>Mus</taxon>
    </lineage>
</organism>
<keyword id="KW-0025">Alternative splicing</keyword>
<keyword id="KW-0067">ATP-binding</keyword>
<keyword id="KW-0227">DNA damage</keyword>
<keyword id="KW-1017">Isopeptide bond</keyword>
<keyword id="KW-0547">Nucleotide-binding</keyword>
<keyword id="KW-0539">Nucleus</keyword>
<keyword id="KW-0597">Phosphoprotein</keyword>
<keyword id="KW-1185">Reference proteome</keyword>
<keyword id="KW-0832">Ubl conjugation</keyword>
<evidence type="ECO:0000250" key="1"/>
<evidence type="ECO:0000250" key="2">
    <source>
        <dbReference type="UniProtKB" id="Q96QE3"/>
    </source>
</evidence>
<evidence type="ECO:0000255" key="3"/>
<evidence type="ECO:0000256" key="4">
    <source>
        <dbReference type="SAM" id="MobiDB-lite"/>
    </source>
</evidence>
<evidence type="ECO:0000269" key="5">
    <source>
    </source>
</evidence>
<evidence type="ECO:0000303" key="6">
    <source>
    </source>
</evidence>
<evidence type="ECO:0000305" key="7"/>
<evidence type="ECO:0007744" key="8">
    <source>
    </source>
</evidence>
<gene>
    <name type="primary">Atad5</name>
    <name type="synonym">Frag1</name>
</gene>
<dbReference type="EMBL" id="AY557610">
    <property type="protein sequence ID" value="AAT52048.1"/>
    <property type="molecule type" value="mRNA"/>
</dbReference>
<dbReference type="EMBL" id="AK032814">
    <property type="protein sequence ID" value="BAE20483.1"/>
    <property type="molecule type" value="mRNA"/>
</dbReference>
<dbReference type="EMBL" id="AK053857">
    <property type="protein sequence ID" value="BAE20694.1"/>
    <property type="molecule type" value="mRNA"/>
</dbReference>
<dbReference type="EMBL" id="AK085211">
    <property type="protein sequence ID" value="BAC39389.2"/>
    <property type="molecule type" value="mRNA"/>
</dbReference>
<dbReference type="EMBL" id="AK136531">
    <property type="protein sequence ID" value="BAE23031.1"/>
    <property type="molecule type" value="mRNA"/>
</dbReference>
<dbReference type="EMBL" id="AK165945">
    <property type="protein sequence ID" value="BAE38477.1"/>
    <property type="molecule type" value="mRNA"/>
</dbReference>
<dbReference type="EMBL" id="AL591113">
    <property type="protein sequence ID" value="CAI24765.1"/>
    <property type="status" value="ALT_SEQ"/>
    <property type="molecule type" value="Genomic_DNA"/>
</dbReference>
<dbReference type="EMBL" id="AL663057">
    <property type="protein sequence ID" value="CAI24765.1"/>
    <property type="status" value="JOINED"/>
    <property type="molecule type" value="Genomic_DNA"/>
</dbReference>
<dbReference type="EMBL" id="AL672178">
    <property type="protein sequence ID" value="CAI24765.1"/>
    <property type="status" value="JOINED"/>
    <property type="molecule type" value="Genomic_DNA"/>
</dbReference>
<dbReference type="EMBL" id="AL672178">
    <property type="protein sequence ID" value="CAI25200.1"/>
    <property type="status" value="ALT_SEQ"/>
    <property type="molecule type" value="Genomic_DNA"/>
</dbReference>
<dbReference type="EMBL" id="AL591113">
    <property type="protein sequence ID" value="CAI25200.1"/>
    <property type="status" value="JOINED"/>
    <property type="molecule type" value="Genomic_DNA"/>
</dbReference>
<dbReference type="EMBL" id="AL663057">
    <property type="protein sequence ID" value="CAI25200.1"/>
    <property type="status" value="JOINED"/>
    <property type="molecule type" value="Genomic_DNA"/>
</dbReference>
<dbReference type="EMBL" id="AL663057">
    <property type="protein sequence ID" value="CAI26037.1"/>
    <property type="status" value="ALT_SEQ"/>
    <property type="molecule type" value="Genomic_DNA"/>
</dbReference>
<dbReference type="EMBL" id="AL591113">
    <property type="protein sequence ID" value="CAI26037.1"/>
    <property type="status" value="JOINED"/>
    <property type="molecule type" value="Genomic_DNA"/>
</dbReference>
<dbReference type="EMBL" id="AL672178">
    <property type="protein sequence ID" value="CAI26037.1"/>
    <property type="status" value="JOINED"/>
    <property type="molecule type" value="Genomic_DNA"/>
</dbReference>
<dbReference type="EMBL" id="BC038279">
    <property type="protein sequence ID" value="AAH38279.2"/>
    <property type="status" value="ALT_SEQ"/>
    <property type="molecule type" value="mRNA"/>
</dbReference>
<dbReference type="CCDS" id="CCDS25127.1">
    <molecule id="Q4QY64-1"/>
</dbReference>
<dbReference type="RefSeq" id="NP_001025027.1">
    <molecule id="Q4QY64-1"/>
    <property type="nucleotide sequence ID" value="NM_001029856.2"/>
</dbReference>
<dbReference type="SMR" id="Q4QY64"/>
<dbReference type="BioGRID" id="231918">
    <property type="interactions" value="4"/>
</dbReference>
<dbReference type="FunCoup" id="Q4QY64">
    <property type="interactions" value="2762"/>
</dbReference>
<dbReference type="IntAct" id="Q4QY64">
    <property type="interactions" value="1"/>
</dbReference>
<dbReference type="STRING" id="10090.ENSMUSP00000017694"/>
<dbReference type="GlyGen" id="Q4QY64">
    <property type="glycosylation" value="2 sites, 1 O-linked glycan (1 site)"/>
</dbReference>
<dbReference type="iPTMnet" id="Q4QY64"/>
<dbReference type="PhosphoSitePlus" id="Q4QY64"/>
<dbReference type="jPOST" id="Q4QY64"/>
<dbReference type="PaxDb" id="10090-ENSMUSP00000017694"/>
<dbReference type="PeptideAtlas" id="Q4QY64"/>
<dbReference type="ProteomicsDB" id="277058">
    <molecule id="Q4QY64-1"/>
</dbReference>
<dbReference type="ProteomicsDB" id="277059">
    <molecule id="Q4QY64-2"/>
</dbReference>
<dbReference type="Pumba" id="Q4QY64"/>
<dbReference type="Antibodypedia" id="15166">
    <property type="antibodies" value="158 antibodies from 29 providers"/>
</dbReference>
<dbReference type="DNASU" id="237877"/>
<dbReference type="Ensembl" id="ENSMUST00000017694.7">
    <molecule id="Q4QY64-1"/>
    <property type="protein sequence ID" value="ENSMUSP00000017694.6"/>
    <property type="gene ID" value="ENSMUSG00000017550.15"/>
</dbReference>
<dbReference type="GeneID" id="237877"/>
<dbReference type="KEGG" id="mmu:237877"/>
<dbReference type="UCSC" id="uc007klf.2">
    <molecule id="Q4QY64-2"/>
    <property type="organism name" value="mouse"/>
</dbReference>
<dbReference type="UCSC" id="uc007klg.2">
    <molecule id="Q4QY64-1"/>
    <property type="organism name" value="mouse"/>
</dbReference>
<dbReference type="AGR" id="MGI:2442925"/>
<dbReference type="CTD" id="79915"/>
<dbReference type="MGI" id="MGI:2442925">
    <property type="gene designation" value="Atad5"/>
</dbReference>
<dbReference type="VEuPathDB" id="HostDB:ENSMUSG00000017550"/>
<dbReference type="eggNOG" id="KOG1968">
    <property type="taxonomic scope" value="Eukaryota"/>
</dbReference>
<dbReference type="GeneTree" id="ENSGT00940000153469"/>
<dbReference type="InParanoid" id="Q4QY64"/>
<dbReference type="OMA" id="KSPKKMY"/>
<dbReference type="OrthoDB" id="9996895at2759"/>
<dbReference type="PhylomeDB" id="Q4QY64"/>
<dbReference type="TreeFam" id="TF329112"/>
<dbReference type="BioGRID-ORCS" id="237877">
    <property type="hits" value="7 hits in 116 CRISPR screens"/>
</dbReference>
<dbReference type="ChiTaRS" id="Atad5">
    <property type="organism name" value="mouse"/>
</dbReference>
<dbReference type="PRO" id="PR:Q4QY64"/>
<dbReference type="Proteomes" id="UP000000589">
    <property type="component" value="Chromosome 11"/>
</dbReference>
<dbReference type="RNAct" id="Q4QY64">
    <property type="molecule type" value="protein"/>
</dbReference>
<dbReference type="Bgee" id="ENSMUSG00000017550">
    <property type="expression patterns" value="Expressed in humerus cartilage element and 199 other cell types or tissues"/>
</dbReference>
<dbReference type="ExpressionAtlas" id="Q4QY64">
    <property type="expression patterns" value="baseline and differential"/>
</dbReference>
<dbReference type="GO" id="GO:0031391">
    <property type="term" value="C:Elg1 RFC-like complex"/>
    <property type="evidence" value="ECO:0000250"/>
    <property type="project" value="UniProtKB"/>
</dbReference>
<dbReference type="GO" id="GO:0005634">
    <property type="term" value="C:nucleus"/>
    <property type="evidence" value="ECO:0000314"/>
    <property type="project" value="MGI"/>
</dbReference>
<dbReference type="GO" id="GO:0005524">
    <property type="term" value="F:ATP binding"/>
    <property type="evidence" value="ECO:0007669"/>
    <property type="project" value="UniProtKB-KW"/>
</dbReference>
<dbReference type="GO" id="GO:0016887">
    <property type="term" value="F:ATP hydrolysis activity"/>
    <property type="evidence" value="ECO:0007669"/>
    <property type="project" value="InterPro"/>
</dbReference>
<dbReference type="GO" id="GO:0061860">
    <property type="term" value="F:DNA clamp unloader activity"/>
    <property type="evidence" value="ECO:0000250"/>
    <property type="project" value="UniProtKB"/>
</dbReference>
<dbReference type="GO" id="GO:0008283">
    <property type="term" value="P:cell population proliferation"/>
    <property type="evidence" value="ECO:0000315"/>
    <property type="project" value="MGI"/>
</dbReference>
<dbReference type="GO" id="GO:0006974">
    <property type="term" value="P:DNA damage response"/>
    <property type="evidence" value="ECO:0000315"/>
    <property type="project" value="MGI"/>
</dbReference>
<dbReference type="GO" id="GO:0008630">
    <property type="term" value="P:intrinsic apoptotic signaling pathway in response to DNA damage"/>
    <property type="evidence" value="ECO:0000316"/>
    <property type="project" value="MGI"/>
</dbReference>
<dbReference type="GO" id="GO:0042771">
    <property type="term" value="P:intrinsic apoptotic signaling pathway in response to DNA damage by p53 class mediator"/>
    <property type="evidence" value="ECO:0000316"/>
    <property type="project" value="MGI"/>
</dbReference>
<dbReference type="GO" id="GO:0045190">
    <property type="term" value="P:isotype switching"/>
    <property type="evidence" value="ECO:0000315"/>
    <property type="project" value="MGI"/>
</dbReference>
<dbReference type="GO" id="GO:1902230">
    <property type="term" value="P:negative regulation of intrinsic apoptotic signaling pathway in response to DNA damage"/>
    <property type="evidence" value="ECO:0000315"/>
    <property type="project" value="MGI"/>
</dbReference>
<dbReference type="GO" id="GO:1902166">
    <property type="term" value="P:negative regulation of intrinsic apoptotic signaling pathway in response to DNA damage by p53 class mediator"/>
    <property type="evidence" value="ECO:0000315"/>
    <property type="project" value="UniProtKB"/>
</dbReference>
<dbReference type="GO" id="GO:0033260">
    <property type="term" value="P:nuclear DNA replication"/>
    <property type="evidence" value="ECO:0000315"/>
    <property type="project" value="MGI"/>
</dbReference>
<dbReference type="GO" id="GO:0030890">
    <property type="term" value="P:positive regulation of B cell proliferation"/>
    <property type="evidence" value="ECO:0000315"/>
    <property type="project" value="MGI"/>
</dbReference>
<dbReference type="GO" id="GO:1902751">
    <property type="term" value="P:positive regulation of cell cycle G2/M phase transition"/>
    <property type="evidence" value="ECO:0000250"/>
    <property type="project" value="UniProtKB"/>
</dbReference>
<dbReference type="GO" id="GO:0045740">
    <property type="term" value="P:positive regulation of DNA replication"/>
    <property type="evidence" value="ECO:0000250"/>
    <property type="project" value="UniProtKB"/>
</dbReference>
<dbReference type="GO" id="GO:0048304">
    <property type="term" value="P:positive regulation of isotype switching to IgG isotypes"/>
    <property type="evidence" value="ECO:0000315"/>
    <property type="project" value="MGI"/>
</dbReference>
<dbReference type="GO" id="GO:1901990">
    <property type="term" value="P:regulation of mitotic cell cycle phase transition"/>
    <property type="evidence" value="ECO:0000315"/>
    <property type="project" value="MGI"/>
</dbReference>
<dbReference type="GO" id="GO:0042770">
    <property type="term" value="P:signal transduction in response to DNA damage"/>
    <property type="evidence" value="ECO:0000315"/>
    <property type="project" value="MGI"/>
</dbReference>
<dbReference type="CDD" id="cd00009">
    <property type="entry name" value="AAA"/>
    <property type="match status" value="1"/>
</dbReference>
<dbReference type="FunFam" id="3.40.50.300:FF:000846">
    <property type="entry name" value="ATPase family AAA domain-containing protein 5"/>
    <property type="match status" value="1"/>
</dbReference>
<dbReference type="FunFam" id="3.40.50.300:FF:001246">
    <property type="entry name" value="ATPase family AAA domain-containing protein 5"/>
    <property type="match status" value="1"/>
</dbReference>
<dbReference type="Gene3D" id="3.40.50.300">
    <property type="entry name" value="P-loop containing nucleotide triphosphate hydrolases"/>
    <property type="match status" value="2"/>
</dbReference>
<dbReference type="InterPro" id="IPR003593">
    <property type="entry name" value="AAA+_ATPase"/>
</dbReference>
<dbReference type="InterPro" id="IPR003959">
    <property type="entry name" value="ATPase_AAA_core"/>
</dbReference>
<dbReference type="InterPro" id="IPR027417">
    <property type="entry name" value="P-loop_NTPase"/>
</dbReference>
<dbReference type="PANTHER" id="PTHR23389:SF21">
    <property type="entry name" value="ATPASE FAMILY AAA DOMAIN-CONTAINING PROTEIN 5"/>
    <property type="match status" value="1"/>
</dbReference>
<dbReference type="PANTHER" id="PTHR23389">
    <property type="entry name" value="CHROMOSOME TRANSMISSION FIDELITY FACTOR 18"/>
    <property type="match status" value="1"/>
</dbReference>
<dbReference type="Pfam" id="PF00004">
    <property type="entry name" value="AAA"/>
    <property type="match status" value="1"/>
</dbReference>
<dbReference type="SMART" id="SM00382">
    <property type="entry name" value="AAA"/>
    <property type="match status" value="1"/>
</dbReference>
<dbReference type="SUPFAM" id="SSF52540">
    <property type="entry name" value="P-loop containing nucleoside triphosphate hydrolases"/>
    <property type="match status" value="1"/>
</dbReference>
<reference key="1">
    <citation type="journal article" date="2005" name="Proc. Natl. Acad. Sci. U.S.A.">
        <title>Frag1, a homolog of alternative replication factor C subunits, links replication stress surveillance with apoptosis.</title>
        <authorList>
            <person name="Ishii H."/>
            <person name="Inageta T."/>
            <person name="Mimori K."/>
            <person name="Saito T."/>
            <person name="Sasaki H."/>
            <person name="Isobe M."/>
            <person name="Mori M."/>
            <person name="Croce C.M."/>
            <person name="Huebner K."/>
            <person name="Ozawa K."/>
            <person name="Furukawa Y."/>
        </authorList>
    </citation>
    <scope>NUCLEOTIDE SEQUENCE [MRNA] (ISOFORM 1)</scope>
    <scope>FUNCTION</scope>
    <scope>INTERACTION WITH RAD9A AND RB1</scope>
    <scope>TISSUE SPECIFICITY</scope>
</reference>
<reference key="2">
    <citation type="journal article" date="2005" name="Science">
        <title>The transcriptional landscape of the mammalian genome.</title>
        <authorList>
            <person name="Carninci P."/>
            <person name="Kasukawa T."/>
            <person name="Katayama S."/>
            <person name="Gough J."/>
            <person name="Frith M.C."/>
            <person name="Maeda N."/>
            <person name="Oyama R."/>
            <person name="Ravasi T."/>
            <person name="Lenhard B."/>
            <person name="Wells C."/>
            <person name="Kodzius R."/>
            <person name="Shimokawa K."/>
            <person name="Bajic V.B."/>
            <person name="Brenner S.E."/>
            <person name="Batalov S."/>
            <person name="Forrest A.R."/>
            <person name="Zavolan M."/>
            <person name="Davis M.J."/>
            <person name="Wilming L.G."/>
            <person name="Aidinis V."/>
            <person name="Allen J.E."/>
            <person name="Ambesi-Impiombato A."/>
            <person name="Apweiler R."/>
            <person name="Aturaliya R.N."/>
            <person name="Bailey T.L."/>
            <person name="Bansal M."/>
            <person name="Baxter L."/>
            <person name="Beisel K.W."/>
            <person name="Bersano T."/>
            <person name="Bono H."/>
            <person name="Chalk A.M."/>
            <person name="Chiu K.P."/>
            <person name="Choudhary V."/>
            <person name="Christoffels A."/>
            <person name="Clutterbuck D.R."/>
            <person name="Crowe M.L."/>
            <person name="Dalla E."/>
            <person name="Dalrymple B.P."/>
            <person name="de Bono B."/>
            <person name="Della Gatta G."/>
            <person name="di Bernardo D."/>
            <person name="Down T."/>
            <person name="Engstrom P."/>
            <person name="Fagiolini M."/>
            <person name="Faulkner G."/>
            <person name="Fletcher C.F."/>
            <person name="Fukushima T."/>
            <person name="Furuno M."/>
            <person name="Futaki S."/>
            <person name="Gariboldi M."/>
            <person name="Georgii-Hemming P."/>
            <person name="Gingeras T.R."/>
            <person name="Gojobori T."/>
            <person name="Green R.E."/>
            <person name="Gustincich S."/>
            <person name="Harbers M."/>
            <person name="Hayashi Y."/>
            <person name="Hensch T.K."/>
            <person name="Hirokawa N."/>
            <person name="Hill D."/>
            <person name="Huminiecki L."/>
            <person name="Iacono M."/>
            <person name="Ikeo K."/>
            <person name="Iwama A."/>
            <person name="Ishikawa T."/>
            <person name="Jakt M."/>
            <person name="Kanapin A."/>
            <person name="Katoh M."/>
            <person name="Kawasawa Y."/>
            <person name="Kelso J."/>
            <person name="Kitamura H."/>
            <person name="Kitano H."/>
            <person name="Kollias G."/>
            <person name="Krishnan S.P."/>
            <person name="Kruger A."/>
            <person name="Kummerfeld S.K."/>
            <person name="Kurochkin I.V."/>
            <person name="Lareau L.F."/>
            <person name="Lazarevic D."/>
            <person name="Lipovich L."/>
            <person name="Liu J."/>
            <person name="Liuni S."/>
            <person name="McWilliam S."/>
            <person name="Madan Babu M."/>
            <person name="Madera M."/>
            <person name="Marchionni L."/>
            <person name="Matsuda H."/>
            <person name="Matsuzawa S."/>
            <person name="Miki H."/>
            <person name="Mignone F."/>
            <person name="Miyake S."/>
            <person name="Morris K."/>
            <person name="Mottagui-Tabar S."/>
            <person name="Mulder N."/>
            <person name="Nakano N."/>
            <person name="Nakauchi H."/>
            <person name="Ng P."/>
            <person name="Nilsson R."/>
            <person name="Nishiguchi S."/>
            <person name="Nishikawa S."/>
            <person name="Nori F."/>
            <person name="Ohara O."/>
            <person name="Okazaki Y."/>
            <person name="Orlando V."/>
            <person name="Pang K.C."/>
            <person name="Pavan W.J."/>
            <person name="Pavesi G."/>
            <person name="Pesole G."/>
            <person name="Petrovsky N."/>
            <person name="Piazza S."/>
            <person name="Reed J."/>
            <person name="Reid J.F."/>
            <person name="Ring B.Z."/>
            <person name="Ringwald M."/>
            <person name="Rost B."/>
            <person name="Ruan Y."/>
            <person name="Salzberg S.L."/>
            <person name="Sandelin A."/>
            <person name="Schneider C."/>
            <person name="Schoenbach C."/>
            <person name="Sekiguchi K."/>
            <person name="Semple C.A."/>
            <person name="Seno S."/>
            <person name="Sessa L."/>
            <person name="Sheng Y."/>
            <person name="Shibata Y."/>
            <person name="Shimada H."/>
            <person name="Shimada K."/>
            <person name="Silva D."/>
            <person name="Sinclair B."/>
            <person name="Sperling S."/>
            <person name="Stupka E."/>
            <person name="Sugiura K."/>
            <person name="Sultana R."/>
            <person name="Takenaka Y."/>
            <person name="Taki K."/>
            <person name="Tammoja K."/>
            <person name="Tan S.L."/>
            <person name="Tang S."/>
            <person name="Taylor M.S."/>
            <person name="Tegner J."/>
            <person name="Teichmann S.A."/>
            <person name="Ueda H.R."/>
            <person name="van Nimwegen E."/>
            <person name="Verardo R."/>
            <person name="Wei C.L."/>
            <person name="Yagi K."/>
            <person name="Yamanishi H."/>
            <person name="Zabarovsky E."/>
            <person name="Zhu S."/>
            <person name="Zimmer A."/>
            <person name="Hide W."/>
            <person name="Bult C."/>
            <person name="Grimmond S.M."/>
            <person name="Teasdale R.D."/>
            <person name="Liu E.T."/>
            <person name="Brusic V."/>
            <person name="Quackenbush J."/>
            <person name="Wahlestedt C."/>
            <person name="Mattick J.S."/>
            <person name="Hume D.A."/>
            <person name="Kai C."/>
            <person name="Sasaki D."/>
            <person name="Tomaru Y."/>
            <person name="Fukuda S."/>
            <person name="Kanamori-Katayama M."/>
            <person name="Suzuki M."/>
            <person name="Aoki J."/>
            <person name="Arakawa T."/>
            <person name="Iida J."/>
            <person name="Imamura K."/>
            <person name="Itoh M."/>
            <person name="Kato T."/>
            <person name="Kawaji H."/>
            <person name="Kawagashira N."/>
            <person name="Kawashima T."/>
            <person name="Kojima M."/>
            <person name="Kondo S."/>
            <person name="Konno H."/>
            <person name="Nakano K."/>
            <person name="Ninomiya N."/>
            <person name="Nishio T."/>
            <person name="Okada M."/>
            <person name="Plessy C."/>
            <person name="Shibata K."/>
            <person name="Shiraki T."/>
            <person name="Suzuki S."/>
            <person name="Tagami M."/>
            <person name="Waki K."/>
            <person name="Watahiki A."/>
            <person name="Okamura-Oho Y."/>
            <person name="Suzuki H."/>
            <person name="Kawai J."/>
            <person name="Hayashizaki Y."/>
        </authorList>
    </citation>
    <scope>NUCLEOTIDE SEQUENCE [LARGE SCALE MRNA] (ISOFORM 2)</scope>
    <scope>NUCLEOTIDE SEQUENCE [LARGE SCALE MRNA] OF 1-762 AND 1463-1826 (ISOFORM 1)</scope>
    <source>
        <strain>C57BL/6J</strain>
        <tissue>Cecum</tissue>
        <tissue>Eye</tissue>
        <tissue>Lung</tissue>
        <tissue>Stomach</tissue>
        <tissue>Wolffian duct</tissue>
    </source>
</reference>
<reference key="3">
    <citation type="journal article" date="2009" name="PLoS Biol.">
        <title>Lineage-specific biology revealed by a finished genome assembly of the mouse.</title>
        <authorList>
            <person name="Church D.M."/>
            <person name="Goodstadt L."/>
            <person name="Hillier L.W."/>
            <person name="Zody M.C."/>
            <person name="Goldstein S."/>
            <person name="She X."/>
            <person name="Bult C.J."/>
            <person name="Agarwala R."/>
            <person name="Cherry J.L."/>
            <person name="DiCuccio M."/>
            <person name="Hlavina W."/>
            <person name="Kapustin Y."/>
            <person name="Meric P."/>
            <person name="Maglott D."/>
            <person name="Birtle Z."/>
            <person name="Marques A.C."/>
            <person name="Graves T."/>
            <person name="Zhou S."/>
            <person name="Teague B."/>
            <person name="Potamousis K."/>
            <person name="Churas C."/>
            <person name="Place M."/>
            <person name="Herschleb J."/>
            <person name="Runnheim R."/>
            <person name="Forrest D."/>
            <person name="Amos-Landgraf J."/>
            <person name="Schwartz D.C."/>
            <person name="Cheng Z."/>
            <person name="Lindblad-Toh K."/>
            <person name="Eichler E.E."/>
            <person name="Ponting C.P."/>
        </authorList>
    </citation>
    <scope>NUCLEOTIDE SEQUENCE [LARGE SCALE GENOMIC DNA]</scope>
    <source>
        <strain>C57BL/6J</strain>
    </source>
</reference>
<reference key="4">
    <citation type="journal article" date="2004" name="Genome Res.">
        <title>The status, quality, and expansion of the NIH full-length cDNA project: the Mammalian Gene Collection (MGC).</title>
        <authorList>
            <consortium name="The MGC Project Team"/>
        </authorList>
    </citation>
    <scope>NUCLEOTIDE SEQUENCE [LARGE SCALE MRNA] OF 1-472 (ISOFORM 1)</scope>
    <source>
        <strain>FVB/N</strain>
        <tissue>Mammary tumor</tissue>
    </source>
</reference>
<reference key="5">
    <citation type="journal article" date="2010" name="Cell">
        <title>A tissue-specific atlas of mouse protein phosphorylation and expression.</title>
        <authorList>
            <person name="Huttlin E.L."/>
            <person name="Jedrychowski M.P."/>
            <person name="Elias J.E."/>
            <person name="Goswami T."/>
            <person name="Rad R."/>
            <person name="Beausoleil S.A."/>
            <person name="Villen J."/>
            <person name="Haas W."/>
            <person name="Sowa M.E."/>
            <person name="Gygi S.P."/>
        </authorList>
    </citation>
    <scope>PHOSPHORYLATION [LARGE SCALE ANALYSIS] AT SER-351 AND SER-727</scope>
    <scope>IDENTIFICATION BY MASS SPECTROMETRY [LARGE SCALE ANALYSIS]</scope>
    <source>
        <tissue>Lung</tissue>
        <tissue>Spleen</tissue>
        <tissue>Testis</tissue>
    </source>
</reference>
<comment type="function">
    <text evidence="2 5">Has an important role in DNA replication and in maintaining genome integrity during replication stress. Involved in a RAD9A-related damage checkpoint, a pathway that is important in determining whether DNA damage is compatible with cell survival or whether it requires cell elimination by apoptosis. Modulates the RAD9A interaction with BCL2 and thereby induces DNA damage-induced apoptosis (PubMed:15983387). Promotes PCNA deubiquitination by recruiting the ubiquitin-specific protease 1 (USP1) and WDR48 thereby down-regulating the error-prone damage bypass pathway. As component of the ATAD5 RFC-like complex, regulates the function of the DNA polymerase processivity factor PCNA by unloading the ring-shaped PCNA homotrimer from DNA after replication during the S phase of the cell cycle. This seems to be dependent on its ATPase activity. Plays important roles in restarting stalled replication forks under replication stress, by unloading the PCNA homotrimer from DNA and recruiting RAD51 possibly through an ATR-dependent manner. Ultimately this enables replication fork regression, breakage, and eventual fork restart. Both the PCNA unloading activity and the interaction with WDR48 are required to efficiently recruit RAD51 to stalled replication forks. Promotes the generation of MUS81-mediated single-stranded DNA-associated breaks in response to replication stress, which is an alternative pathway to restart stalled/regressed replication forks (By similarity).</text>
</comment>
<comment type="subunit">
    <text evidence="2 5">Component of a heteropentameric replication factor ATAD5 RFC-like complex composed of one large subunit (ATAD5) and four small subunits (RFC2, RFC3, RFC4 and RFC5). Within the ATAD5 RFC-like complex, interacts with RFC2, RFC4 and RFC5. Within the ATAD5 RFC-like complex, interacts directly via-N terminal with RAD51; the interactions is enhanced under replication stress (By similarity). Interacts with RB1 predominantly in G1 phase via its LXCXE motif (PubMed:15983387). Interacts with RAD9A in growing cells (PubMed:15983387). The interaction with RAD9A is reduced after exposure to DNA replication-inhibiting agents (PubMed:15983387). Interacts with BRD4. Interacts with PCNA. Interacts with deubiquitinating enzyme USP1, and its associated factor, WDR48 (By similarity).</text>
</comment>
<comment type="subcellular location">
    <subcellularLocation>
        <location evidence="2">Nucleus</location>
    </subcellularLocation>
    <text evidence="2">Accumulates in nuclear foci at sites of stalled DNA replication forks in response to DNA damage.</text>
</comment>
<comment type="alternative products">
    <event type="alternative splicing"/>
    <isoform>
        <id>Q4QY64-1</id>
        <name>1</name>
        <sequence type="displayed"/>
    </isoform>
    <isoform>
        <id>Q4QY64-2</id>
        <name>2</name>
        <sequence type="described" ref="VSP_031098 VSP_031099"/>
    </isoform>
</comment>
<comment type="tissue specificity">
    <text evidence="5">Expressed ubiquitously in all cell lines like teratocarcinoma, cell lymphoma, lymphoma.</text>
</comment>
<comment type="induction">
    <text>Down-regulated by DNA replication-inhibiting agents.</text>
</comment>
<comment type="PTM">
    <text evidence="1">ATR may stimulate the RAD9A dissociation.</text>
</comment>
<comment type="similarity">
    <text evidence="7">Belongs to the AAA ATPase family.</text>
</comment>
<comment type="sequence caution" evidence="7">
    <conflict type="miscellaneous discrepancy">
        <sequence resource="EMBL-CDS" id="AAH38279"/>
    </conflict>
    <text>Contaminating sequence. Potential poly-A sequence.</text>
</comment>
<comment type="sequence caution" evidence="7">
    <conflict type="erroneous gene model prediction">
        <sequence resource="EMBL-CDS" id="CAI24765"/>
    </conflict>
</comment>
<comment type="sequence caution" evidence="7">
    <conflict type="erroneous gene model prediction">
        <sequence resource="EMBL-CDS" id="CAI25200"/>
    </conflict>
</comment>
<comment type="sequence caution" evidence="7">
    <conflict type="erroneous gene model prediction">
        <sequence resource="EMBL-CDS" id="CAI26037"/>
    </conflict>
</comment>
<accession>Q4QY64</accession>
<accession>Q3TMG5</accession>
<accession>Q3UW85</accession>
<accession>Q3V306</accession>
<accession>Q3V3T9</accession>
<accession>Q5SSK4</accession>
<accession>Q8BUH4</accession>
<accession>Q8CGG7</accession>
<feature type="chain" id="PRO_0000317619" description="ATPase family AAA domain-containing protein 5">
    <location>
        <begin position="1"/>
        <end position="1826"/>
    </location>
</feature>
<feature type="region of interest" description="Disordered" evidence="4">
    <location>
        <begin position="170"/>
        <end position="254"/>
    </location>
</feature>
<feature type="region of interest" description="Disordered" evidence="4">
    <location>
        <begin position="282"/>
        <end position="311"/>
    </location>
</feature>
<feature type="region of interest" description="Disordered" evidence="4">
    <location>
        <begin position="323"/>
        <end position="367"/>
    </location>
</feature>
<feature type="region of interest" description="Interaction with WDR48" evidence="2">
    <location>
        <begin position="365"/>
        <end position="381"/>
    </location>
</feature>
<feature type="region of interest" description="Disordered" evidence="4">
    <location>
        <begin position="398"/>
        <end position="572"/>
    </location>
</feature>
<feature type="region of interest" description="Disordered" evidence="4">
    <location>
        <begin position="588"/>
        <end position="623"/>
    </location>
</feature>
<feature type="region of interest" description="Disordered" evidence="4">
    <location>
        <begin position="647"/>
        <end position="684"/>
    </location>
</feature>
<feature type="region of interest" description="Disordered" evidence="4">
    <location>
        <begin position="709"/>
        <end position="729"/>
    </location>
</feature>
<feature type="region of interest" description="Disordered" evidence="4">
    <location>
        <begin position="965"/>
        <end position="1034"/>
    </location>
</feature>
<feature type="region of interest" description="Disordered" evidence="4">
    <location>
        <begin position="1183"/>
        <end position="1216"/>
    </location>
</feature>
<feature type="region of interest" description="Disordered" evidence="4">
    <location>
        <begin position="1527"/>
        <end position="1552"/>
    </location>
</feature>
<feature type="region of interest" description="Disordered" evidence="4">
    <location>
        <begin position="1592"/>
        <end position="1611"/>
    </location>
</feature>
<feature type="region of interest" description="Interaction with RAD51 and RFC5" evidence="2">
    <location>
        <begin position="1612"/>
        <end position="1701"/>
    </location>
</feature>
<feature type="short sequence motif" description="LXCXE motif">
    <location>
        <begin position="1415"/>
        <end position="1419"/>
    </location>
</feature>
<feature type="compositionally biased region" description="Basic and acidic residues" evidence="4">
    <location>
        <begin position="243"/>
        <end position="254"/>
    </location>
</feature>
<feature type="compositionally biased region" description="Low complexity" evidence="4">
    <location>
        <begin position="298"/>
        <end position="311"/>
    </location>
</feature>
<feature type="compositionally biased region" description="Basic and acidic residues" evidence="4">
    <location>
        <begin position="418"/>
        <end position="442"/>
    </location>
</feature>
<feature type="compositionally biased region" description="Polar residues" evidence="4">
    <location>
        <begin position="445"/>
        <end position="456"/>
    </location>
</feature>
<feature type="compositionally biased region" description="Basic and acidic residues" evidence="4">
    <location>
        <begin position="459"/>
        <end position="468"/>
    </location>
</feature>
<feature type="compositionally biased region" description="Basic residues" evidence="4">
    <location>
        <begin position="469"/>
        <end position="481"/>
    </location>
</feature>
<feature type="compositionally biased region" description="Basic and acidic residues" evidence="4">
    <location>
        <begin position="487"/>
        <end position="505"/>
    </location>
</feature>
<feature type="compositionally biased region" description="Polar residues" evidence="4">
    <location>
        <begin position="540"/>
        <end position="559"/>
    </location>
</feature>
<feature type="compositionally biased region" description="Basic and acidic residues" evidence="4">
    <location>
        <begin position="1006"/>
        <end position="1019"/>
    </location>
</feature>
<feature type="binding site" evidence="3">
    <location>
        <begin position="1119"/>
        <end position="1126"/>
    </location>
    <ligand>
        <name>ATP</name>
        <dbReference type="ChEBI" id="CHEBI:30616"/>
    </ligand>
</feature>
<feature type="modified residue" description="Phosphoserine" evidence="2">
    <location>
        <position position="44"/>
    </location>
</feature>
<feature type="modified residue" description="Phosphoserine" evidence="2">
    <location>
        <position position="215"/>
    </location>
</feature>
<feature type="modified residue" description="Phosphoserine" evidence="8">
    <location>
        <position position="351"/>
    </location>
</feature>
<feature type="modified residue" description="Phosphoserine" evidence="2">
    <location>
        <position position="366"/>
    </location>
</feature>
<feature type="modified residue" description="Phosphoserine" evidence="2">
    <location>
        <position position="591"/>
    </location>
</feature>
<feature type="modified residue" description="Phosphoserine" evidence="2">
    <location>
        <position position="603"/>
    </location>
</feature>
<feature type="modified residue" description="Phosphoserine" evidence="8">
    <location>
        <position position="727"/>
    </location>
</feature>
<feature type="modified residue" description="Phosphoserine" evidence="2">
    <location>
        <position position="801"/>
    </location>
</feature>
<feature type="modified residue" description="Phosphoserine" evidence="2">
    <location>
        <position position="1104"/>
    </location>
</feature>
<feature type="cross-link" description="Glycyl lysine isopeptide (Lys-Gly) (interchain with G-Cter in SUMO2)" evidence="2">
    <location>
        <position position="127"/>
    </location>
</feature>
<feature type="splice variant" id="VSP_031098" description="In isoform 2." evidence="6">
    <original>KMKIAPLFLAKRTKRAAIPVFDLDESSQDSSEQTQDCDVQ</original>
    <variation>NWIHYCFMDTLLLSTVLWITIHKCLGAIHPEYSGVLSQKS</variation>
    <location>
        <begin position="775"/>
        <end position="814"/>
    </location>
</feature>
<feature type="splice variant" id="VSP_031099" description="In isoform 2." evidence="6">
    <location>
        <begin position="815"/>
        <end position="1826"/>
    </location>
</feature>
<feature type="sequence conflict" description="In Ref. 2; BAE38477." evidence="7" ref="2">
    <original>P</original>
    <variation>H</variation>
    <location>
        <position position="330"/>
    </location>
</feature>
<name>ATAD5_MOUSE</name>